<protein>
    <recommendedName>
        <fullName evidence="1">Small ribosomal subunit protein uS10</fullName>
    </recommendedName>
    <alternativeName>
        <fullName evidence="2">30S ribosomal protein S10</fullName>
    </alternativeName>
</protein>
<comment type="function">
    <text evidence="1">Involved in the binding of tRNA to the ribosomes.</text>
</comment>
<comment type="subunit">
    <text evidence="1">Part of the 30S ribosomal subunit.</text>
</comment>
<comment type="similarity">
    <text evidence="1">Belongs to the universal ribosomal protein uS10 family.</text>
</comment>
<name>RS10_STRGG</name>
<reference key="1">
    <citation type="journal article" date="2008" name="J. Bacteriol.">
        <title>Genome sequence of the streptomycin-producing microorganism Streptomyces griseus IFO 13350.</title>
        <authorList>
            <person name="Ohnishi Y."/>
            <person name="Ishikawa J."/>
            <person name="Hara H."/>
            <person name="Suzuki H."/>
            <person name="Ikenoya M."/>
            <person name="Ikeda H."/>
            <person name="Yamashita A."/>
            <person name="Hattori M."/>
            <person name="Horinouchi S."/>
        </authorList>
    </citation>
    <scope>NUCLEOTIDE SEQUENCE [LARGE SCALE GENOMIC DNA]</scope>
    <source>
        <strain>JCM 4626 / CBS 651.72 / NBRC 13350 / KCC S-0626 / ISP 5235</strain>
    </source>
</reference>
<organism>
    <name type="scientific">Streptomyces griseus subsp. griseus (strain JCM 4626 / CBS 651.72 / NBRC 13350 / KCC S-0626 / ISP 5235)</name>
    <dbReference type="NCBI Taxonomy" id="455632"/>
    <lineage>
        <taxon>Bacteria</taxon>
        <taxon>Bacillati</taxon>
        <taxon>Actinomycetota</taxon>
        <taxon>Actinomycetes</taxon>
        <taxon>Kitasatosporales</taxon>
        <taxon>Streptomycetaceae</taxon>
        <taxon>Streptomyces</taxon>
    </lineage>
</organism>
<accession>B1W408</accession>
<keyword id="KW-0687">Ribonucleoprotein</keyword>
<keyword id="KW-0689">Ribosomal protein</keyword>
<gene>
    <name evidence="1" type="primary">rpsJ</name>
    <name type="ordered locus">SGR_2835</name>
</gene>
<evidence type="ECO:0000255" key="1">
    <source>
        <dbReference type="HAMAP-Rule" id="MF_00508"/>
    </source>
</evidence>
<evidence type="ECO:0000305" key="2"/>
<sequence>MAGQKIRIRLKAYDHEVIDSSAKKIVETVTRTGASVAGPVPLPTEKNVYCVIKSPHKYKDSREHFEMRTHKRLIDILDPTPKTVDSLMRLDLPAGVDIEIKL</sequence>
<dbReference type="EMBL" id="AP009493">
    <property type="protein sequence ID" value="BAG19664.1"/>
    <property type="molecule type" value="Genomic_DNA"/>
</dbReference>
<dbReference type="RefSeq" id="WP_003948644.1">
    <property type="nucleotide sequence ID" value="NC_010572.1"/>
</dbReference>
<dbReference type="SMR" id="B1W408"/>
<dbReference type="GeneID" id="97760369"/>
<dbReference type="KEGG" id="sgr:SGR_2835"/>
<dbReference type="eggNOG" id="COG0051">
    <property type="taxonomic scope" value="Bacteria"/>
</dbReference>
<dbReference type="HOGENOM" id="CLU_122625_1_3_11"/>
<dbReference type="Proteomes" id="UP000001685">
    <property type="component" value="Chromosome"/>
</dbReference>
<dbReference type="GO" id="GO:1990904">
    <property type="term" value="C:ribonucleoprotein complex"/>
    <property type="evidence" value="ECO:0007669"/>
    <property type="project" value="UniProtKB-KW"/>
</dbReference>
<dbReference type="GO" id="GO:0005840">
    <property type="term" value="C:ribosome"/>
    <property type="evidence" value="ECO:0007669"/>
    <property type="project" value="UniProtKB-KW"/>
</dbReference>
<dbReference type="GO" id="GO:0003735">
    <property type="term" value="F:structural constituent of ribosome"/>
    <property type="evidence" value="ECO:0007669"/>
    <property type="project" value="InterPro"/>
</dbReference>
<dbReference type="GO" id="GO:0000049">
    <property type="term" value="F:tRNA binding"/>
    <property type="evidence" value="ECO:0007669"/>
    <property type="project" value="UniProtKB-UniRule"/>
</dbReference>
<dbReference type="GO" id="GO:0006412">
    <property type="term" value="P:translation"/>
    <property type="evidence" value="ECO:0007669"/>
    <property type="project" value="UniProtKB-UniRule"/>
</dbReference>
<dbReference type="FunFam" id="3.30.70.600:FF:000001">
    <property type="entry name" value="30S ribosomal protein S10"/>
    <property type="match status" value="1"/>
</dbReference>
<dbReference type="Gene3D" id="3.30.70.600">
    <property type="entry name" value="Ribosomal protein S10 domain"/>
    <property type="match status" value="1"/>
</dbReference>
<dbReference type="HAMAP" id="MF_00508">
    <property type="entry name" value="Ribosomal_uS10"/>
    <property type="match status" value="1"/>
</dbReference>
<dbReference type="InterPro" id="IPR001848">
    <property type="entry name" value="Ribosomal_uS10"/>
</dbReference>
<dbReference type="InterPro" id="IPR018268">
    <property type="entry name" value="Ribosomal_uS10_CS"/>
</dbReference>
<dbReference type="InterPro" id="IPR027486">
    <property type="entry name" value="Ribosomal_uS10_dom"/>
</dbReference>
<dbReference type="InterPro" id="IPR036838">
    <property type="entry name" value="Ribosomal_uS10_dom_sf"/>
</dbReference>
<dbReference type="NCBIfam" id="NF001861">
    <property type="entry name" value="PRK00596.1"/>
    <property type="match status" value="1"/>
</dbReference>
<dbReference type="NCBIfam" id="TIGR01049">
    <property type="entry name" value="rpsJ_bact"/>
    <property type="match status" value="1"/>
</dbReference>
<dbReference type="PANTHER" id="PTHR11700">
    <property type="entry name" value="30S RIBOSOMAL PROTEIN S10 FAMILY MEMBER"/>
    <property type="match status" value="1"/>
</dbReference>
<dbReference type="Pfam" id="PF00338">
    <property type="entry name" value="Ribosomal_S10"/>
    <property type="match status" value="1"/>
</dbReference>
<dbReference type="PRINTS" id="PR00971">
    <property type="entry name" value="RIBOSOMALS10"/>
</dbReference>
<dbReference type="SMART" id="SM01403">
    <property type="entry name" value="Ribosomal_S10"/>
    <property type="match status" value="1"/>
</dbReference>
<dbReference type="SUPFAM" id="SSF54999">
    <property type="entry name" value="Ribosomal protein S10"/>
    <property type="match status" value="1"/>
</dbReference>
<dbReference type="PROSITE" id="PS00361">
    <property type="entry name" value="RIBOSOMAL_S10"/>
    <property type="match status" value="1"/>
</dbReference>
<feature type="chain" id="PRO_1000127186" description="Small ribosomal subunit protein uS10">
    <location>
        <begin position="1"/>
        <end position="102"/>
    </location>
</feature>
<proteinExistence type="inferred from homology"/>